<sequence>MIMFLYSSFSMILFILGLFCFVSNRKHLLSMLLSLEFIVLILFFMLFIYLNLMNYENYFSMMFLTFSVCEGALGLSILVSMIRTHGNDYFQSFSIM</sequence>
<feature type="chain" id="PRO_0000291535" description="NADH-ubiquinone oxidoreductase chain 4L">
    <location>
        <begin position="1"/>
        <end position="96"/>
    </location>
</feature>
<feature type="transmembrane region" description="Helical" evidence="2">
    <location>
        <begin position="2"/>
        <end position="22"/>
    </location>
</feature>
<feature type="transmembrane region" description="Helical" evidence="2">
    <location>
        <begin position="28"/>
        <end position="48"/>
    </location>
</feature>
<feature type="transmembrane region" description="Helical" evidence="2">
    <location>
        <begin position="62"/>
        <end position="82"/>
    </location>
</feature>
<name>NU4LM_DRONF</name>
<comment type="function">
    <text evidence="1">Core subunit of the mitochondrial membrane respiratory chain NADH dehydrogenase (Complex I) that is believed to belong to the minimal assembly required for catalysis. Complex I functions in the transfer of electrons from NADH to the respiratory chain. The immediate electron acceptor for the enzyme is believed to be ubiquinone (By similarity).</text>
</comment>
<comment type="catalytic activity">
    <reaction>
        <text>a ubiquinone + NADH + 5 H(+)(in) = a ubiquinol + NAD(+) + 4 H(+)(out)</text>
        <dbReference type="Rhea" id="RHEA:29091"/>
        <dbReference type="Rhea" id="RHEA-COMP:9565"/>
        <dbReference type="Rhea" id="RHEA-COMP:9566"/>
        <dbReference type="ChEBI" id="CHEBI:15378"/>
        <dbReference type="ChEBI" id="CHEBI:16389"/>
        <dbReference type="ChEBI" id="CHEBI:17976"/>
        <dbReference type="ChEBI" id="CHEBI:57540"/>
        <dbReference type="ChEBI" id="CHEBI:57945"/>
        <dbReference type="EC" id="7.1.1.2"/>
    </reaction>
</comment>
<comment type="subcellular location">
    <subcellularLocation>
        <location evidence="1">Mitochondrion membrane</location>
        <topology evidence="1">Multi-pass membrane protein</topology>
    </subcellularLocation>
</comment>
<comment type="similarity">
    <text evidence="2">Belongs to the complex I subunit 4L family.</text>
</comment>
<proteinExistence type="inferred from homology"/>
<reference evidence="3" key="1">
    <citation type="journal article" date="1999" name="Mol. Phylogenet. Evol.">
        <title>Phylogeny and evolution of the Drosophila nasuta subgroup based on mitochondrial ND4 and ND4L gene sequences.</title>
        <authorList>
            <person name="Yu H."/>
            <person name="Wang W."/>
            <person name="Fang S."/>
            <person name="Zhang Y.P."/>
            <person name="Lin F.J."/>
            <person name="Geng Z.C."/>
        </authorList>
    </citation>
    <scope>NUCLEOTIDE SEQUENCE [GENOMIC DNA]</scope>
</reference>
<protein>
    <recommendedName>
        <fullName>NADH-ubiquinone oxidoreductase chain 4L</fullName>
        <ecNumber>7.1.1.2</ecNumber>
    </recommendedName>
    <alternativeName>
        <fullName>NADH dehydrogenase subunit 4L</fullName>
    </alternativeName>
</protein>
<geneLocation type="mitochondrion" evidence="3"/>
<dbReference type="EC" id="7.1.1.2"/>
<dbReference type="EMBL" id="AF182338">
    <property type="protein sequence ID" value="AAF03746.1"/>
    <property type="molecule type" value="Genomic_DNA"/>
</dbReference>
<dbReference type="SMR" id="Q9T4R3"/>
<dbReference type="GO" id="GO:0031966">
    <property type="term" value="C:mitochondrial membrane"/>
    <property type="evidence" value="ECO:0007669"/>
    <property type="project" value="UniProtKB-SubCell"/>
</dbReference>
<dbReference type="GO" id="GO:0030964">
    <property type="term" value="C:NADH dehydrogenase complex"/>
    <property type="evidence" value="ECO:0007669"/>
    <property type="project" value="TreeGrafter"/>
</dbReference>
<dbReference type="GO" id="GO:0008137">
    <property type="term" value="F:NADH dehydrogenase (ubiquinone) activity"/>
    <property type="evidence" value="ECO:0007669"/>
    <property type="project" value="UniProtKB-EC"/>
</dbReference>
<dbReference type="GO" id="GO:0042773">
    <property type="term" value="P:ATP synthesis coupled electron transport"/>
    <property type="evidence" value="ECO:0007669"/>
    <property type="project" value="InterPro"/>
</dbReference>
<dbReference type="FunFam" id="1.10.287.3510:FF:000003">
    <property type="entry name" value="NADH-ubiquinone oxidoreductase chain 4L"/>
    <property type="match status" value="1"/>
</dbReference>
<dbReference type="Gene3D" id="1.10.287.3510">
    <property type="match status" value="1"/>
</dbReference>
<dbReference type="InterPro" id="IPR001133">
    <property type="entry name" value="NADH_UbQ_OxRdtase_chain4L/K"/>
</dbReference>
<dbReference type="InterPro" id="IPR039428">
    <property type="entry name" value="NUOK/Mnh_C1-like"/>
</dbReference>
<dbReference type="PANTHER" id="PTHR11434:SF0">
    <property type="entry name" value="NADH-UBIQUINONE OXIDOREDUCTASE CHAIN 4L"/>
    <property type="match status" value="1"/>
</dbReference>
<dbReference type="PANTHER" id="PTHR11434">
    <property type="entry name" value="NADH-UBIQUINONE OXIDOREDUCTASE SUBUNIT ND4L"/>
    <property type="match status" value="1"/>
</dbReference>
<dbReference type="Pfam" id="PF00420">
    <property type="entry name" value="Oxidored_q2"/>
    <property type="match status" value="1"/>
</dbReference>
<evidence type="ECO:0000250" key="1"/>
<evidence type="ECO:0000255" key="2"/>
<evidence type="ECO:0000312" key="3">
    <source>
        <dbReference type="EMBL" id="AAF03746.1"/>
    </source>
</evidence>
<organism>
    <name type="scientific">Drosophila nasuta F</name>
    <name type="common">Fruit fly</name>
    <dbReference type="NCBI Taxonomy" id="88887"/>
    <lineage>
        <taxon>Eukaryota</taxon>
        <taxon>Metazoa</taxon>
        <taxon>Ecdysozoa</taxon>
        <taxon>Arthropoda</taxon>
        <taxon>Hexapoda</taxon>
        <taxon>Insecta</taxon>
        <taxon>Pterygota</taxon>
        <taxon>Neoptera</taxon>
        <taxon>Endopterygota</taxon>
        <taxon>Diptera</taxon>
        <taxon>Brachycera</taxon>
        <taxon>Muscomorpha</taxon>
        <taxon>Ephydroidea</taxon>
        <taxon>Drosophilidae</taxon>
        <taxon>Drosophila</taxon>
    </lineage>
</organism>
<gene>
    <name type="primary">mt:ND4L</name>
    <name evidence="3" type="synonym">ND4L</name>
</gene>
<accession>Q9T4R3</accession>
<keyword id="KW-0249">Electron transport</keyword>
<keyword id="KW-0472">Membrane</keyword>
<keyword id="KW-0496">Mitochondrion</keyword>
<keyword id="KW-0520">NAD</keyword>
<keyword id="KW-0679">Respiratory chain</keyword>
<keyword id="KW-1278">Translocase</keyword>
<keyword id="KW-0812">Transmembrane</keyword>
<keyword id="KW-1133">Transmembrane helix</keyword>
<keyword id="KW-0813">Transport</keyword>
<keyword id="KW-0830">Ubiquinone</keyword>